<evidence type="ECO:0000255" key="1">
    <source>
        <dbReference type="HAMAP-Rule" id="MF_01635"/>
    </source>
</evidence>
<organism>
    <name type="scientific">Xanthomonas euvesicatoria pv. vesicatoria (strain 85-10)</name>
    <name type="common">Xanthomonas campestris pv. vesicatoria</name>
    <dbReference type="NCBI Taxonomy" id="316273"/>
    <lineage>
        <taxon>Bacteria</taxon>
        <taxon>Pseudomonadati</taxon>
        <taxon>Pseudomonadota</taxon>
        <taxon>Gammaproteobacteria</taxon>
        <taxon>Lysobacterales</taxon>
        <taxon>Lysobacteraceae</taxon>
        <taxon>Xanthomonas</taxon>
    </lineage>
</organism>
<comment type="function">
    <text evidence="1">Catalyzes the prenylation of para-hydroxybenzoate (PHB) with an all-trans polyprenyl group. Mediates the second step in the final reaction sequence of ubiquinone-8 (UQ-8) biosynthesis, which is the condensation of the polyisoprenoid side chain with PHB, generating the first membrane-bound Q intermediate 3-octaprenyl-4-hydroxybenzoate.</text>
</comment>
<comment type="catalytic activity">
    <reaction evidence="1">
        <text>all-trans-octaprenyl diphosphate + 4-hydroxybenzoate = 4-hydroxy-3-(all-trans-octaprenyl)benzoate + diphosphate</text>
        <dbReference type="Rhea" id="RHEA:27782"/>
        <dbReference type="ChEBI" id="CHEBI:1617"/>
        <dbReference type="ChEBI" id="CHEBI:17879"/>
        <dbReference type="ChEBI" id="CHEBI:33019"/>
        <dbReference type="ChEBI" id="CHEBI:57711"/>
        <dbReference type="EC" id="2.5.1.39"/>
    </reaction>
</comment>
<comment type="cofactor">
    <cofactor evidence="1">
        <name>Mg(2+)</name>
        <dbReference type="ChEBI" id="CHEBI:18420"/>
    </cofactor>
</comment>
<comment type="pathway">
    <text evidence="1">Cofactor biosynthesis; ubiquinone biosynthesis.</text>
</comment>
<comment type="subcellular location">
    <subcellularLocation>
        <location evidence="1">Cell inner membrane</location>
        <topology evidence="1">Multi-pass membrane protein</topology>
    </subcellularLocation>
</comment>
<comment type="similarity">
    <text evidence="1">Belongs to the UbiA prenyltransferase family.</text>
</comment>
<name>UBIA_XANE5</name>
<protein>
    <recommendedName>
        <fullName evidence="1">4-hydroxybenzoate octaprenyltransferase</fullName>
        <ecNumber evidence="1">2.5.1.39</ecNumber>
    </recommendedName>
    <alternativeName>
        <fullName evidence="1">4-HB polyprenyltransferase</fullName>
    </alternativeName>
</protein>
<sequence length="301" mass="33430">MSKHGVEQLPAARALTWPQRLGQYWKLVRGDRPIGSLLLLWPTWWALWLAADGLPPLWTLLVFTAGVWLTRSAGCVINDYADRWLDPHVERTKSRPLATGAVSGREALWVFVVLMLVAFALVLTLNWLTVALSVPGVFLAASYPYLKRHTHLPQVYLGMAFGWGIPMAFAAVQGRVPLLGWLLYAANILWATAYDTWYAMVDRDDDIRMGSKSTAILFGRFDLIAQGILYALMAATLVLVGLRADLGVAYWAGLAVAALLVAYEFRIARHRERGPCFRAFLHNNWVGLAIFVGIAVAVAGR</sequence>
<accession>Q3BYM7</accession>
<dbReference type="EC" id="2.5.1.39" evidence="1"/>
<dbReference type="EMBL" id="AM039952">
    <property type="protein sequence ID" value="CAJ22036.1"/>
    <property type="molecule type" value="Genomic_DNA"/>
</dbReference>
<dbReference type="RefSeq" id="WP_011346086.1">
    <property type="nucleotide sequence ID" value="NZ_CP017190.1"/>
</dbReference>
<dbReference type="SMR" id="Q3BYM7"/>
<dbReference type="STRING" id="456327.BJD11_20845"/>
<dbReference type="KEGG" id="xcv:XCV0405"/>
<dbReference type="eggNOG" id="COG0382">
    <property type="taxonomic scope" value="Bacteria"/>
</dbReference>
<dbReference type="HOGENOM" id="CLU_034879_1_0_6"/>
<dbReference type="UniPathway" id="UPA00232"/>
<dbReference type="Proteomes" id="UP000007069">
    <property type="component" value="Chromosome"/>
</dbReference>
<dbReference type="GO" id="GO:0005886">
    <property type="term" value="C:plasma membrane"/>
    <property type="evidence" value="ECO:0007669"/>
    <property type="project" value="UniProtKB-SubCell"/>
</dbReference>
<dbReference type="GO" id="GO:0008412">
    <property type="term" value="F:4-hydroxybenzoate polyprenyltransferase activity"/>
    <property type="evidence" value="ECO:0007669"/>
    <property type="project" value="UniProtKB-UniRule"/>
</dbReference>
<dbReference type="GO" id="GO:0006744">
    <property type="term" value="P:ubiquinone biosynthetic process"/>
    <property type="evidence" value="ECO:0007669"/>
    <property type="project" value="UniProtKB-UniRule"/>
</dbReference>
<dbReference type="CDD" id="cd13959">
    <property type="entry name" value="PT_UbiA_COQ2"/>
    <property type="match status" value="1"/>
</dbReference>
<dbReference type="FunFam" id="1.10.357.140:FF:000002">
    <property type="entry name" value="4-hydroxybenzoate octaprenyltransferase"/>
    <property type="match status" value="1"/>
</dbReference>
<dbReference type="FunFam" id="1.20.120.1780:FF:000001">
    <property type="entry name" value="4-hydroxybenzoate octaprenyltransferase"/>
    <property type="match status" value="1"/>
</dbReference>
<dbReference type="Gene3D" id="1.10.357.140">
    <property type="entry name" value="UbiA prenyltransferase"/>
    <property type="match status" value="1"/>
</dbReference>
<dbReference type="Gene3D" id="1.20.120.1780">
    <property type="entry name" value="UbiA prenyltransferase"/>
    <property type="match status" value="1"/>
</dbReference>
<dbReference type="HAMAP" id="MF_01635">
    <property type="entry name" value="UbiA"/>
    <property type="match status" value="1"/>
</dbReference>
<dbReference type="InterPro" id="IPR006370">
    <property type="entry name" value="HB_polyprenyltransferase-like"/>
</dbReference>
<dbReference type="InterPro" id="IPR039653">
    <property type="entry name" value="Prenyltransferase"/>
</dbReference>
<dbReference type="InterPro" id="IPR000537">
    <property type="entry name" value="UbiA_prenyltransferase"/>
</dbReference>
<dbReference type="InterPro" id="IPR030470">
    <property type="entry name" value="UbiA_prenylTrfase_CS"/>
</dbReference>
<dbReference type="InterPro" id="IPR044878">
    <property type="entry name" value="UbiA_sf"/>
</dbReference>
<dbReference type="NCBIfam" id="TIGR01474">
    <property type="entry name" value="ubiA_proteo"/>
    <property type="match status" value="1"/>
</dbReference>
<dbReference type="PANTHER" id="PTHR11048:SF28">
    <property type="entry name" value="4-HYDROXYBENZOATE POLYPRENYLTRANSFERASE, MITOCHONDRIAL"/>
    <property type="match status" value="1"/>
</dbReference>
<dbReference type="PANTHER" id="PTHR11048">
    <property type="entry name" value="PRENYLTRANSFERASES"/>
    <property type="match status" value="1"/>
</dbReference>
<dbReference type="Pfam" id="PF01040">
    <property type="entry name" value="UbiA"/>
    <property type="match status" value="1"/>
</dbReference>
<dbReference type="PROSITE" id="PS00943">
    <property type="entry name" value="UBIA"/>
    <property type="match status" value="1"/>
</dbReference>
<reference key="1">
    <citation type="journal article" date="2005" name="J. Bacteriol.">
        <title>Insights into genome plasticity and pathogenicity of the plant pathogenic Bacterium Xanthomonas campestris pv. vesicatoria revealed by the complete genome sequence.</title>
        <authorList>
            <person name="Thieme F."/>
            <person name="Koebnik R."/>
            <person name="Bekel T."/>
            <person name="Berger C."/>
            <person name="Boch J."/>
            <person name="Buettner D."/>
            <person name="Caldana C."/>
            <person name="Gaigalat L."/>
            <person name="Goesmann A."/>
            <person name="Kay S."/>
            <person name="Kirchner O."/>
            <person name="Lanz C."/>
            <person name="Linke B."/>
            <person name="McHardy A.C."/>
            <person name="Meyer F."/>
            <person name="Mittenhuber G."/>
            <person name="Nies D.H."/>
            <person name="Niesbach-Kloesgen U."/>
            <person name="Patschkowski T."/>
            <person name="Rueckert C."/>
            <person name="Rupp O."/>
            <person name="Schneiker S."/>
            <person name="Schuster S.C."/>
            <person name="Vorhoelter F.J."/>
            <person name="Weber E."/>
            <person name="Puehler A."/>
            <person name="Bonas U."/>
            <person name="Bartels D."/>
            <person name="Kaiser O."/>
        </authorList>
    </citation>
    <scope>NUCLEOTIDE SEQUENCE [LARGE SCALE GENOMIC DNA]</scope>
    <source>
        <strain>85-10</strain>
    </source>
</reference>
<feature type="chain" id="PRO_0000262857" description="4-hydroxybenzoate octaprenyltransferase">
    <location>
        <begin position="1"/>
        <end position="301"/>
    </location>
</feature>
<feature type="transmembrane region" description="Helical" evidence="1">
    <location>
        <begin position="34"/>
        <end position="54"/>
    </location>
</feature>
<feature type="transmembrane region" description="Helical" evidence="1">
    <location>
        <begin position="57"/>
        <end position="77"/>
    </location>
</feature>
<feature type="transmembrane region" description="Helical" evidence="1">
    <location>
        <begin position="108"/>
        <end position="128"/>
    </location>
</feature>
<feature type="transmembrane region" description="Helical" evidence="1">
    <location>
        <begin position="152"/>
        <end position="172"/>
    </location>
</feature>
<feature type="transmembrane region" description="Helical" evidence="1">
    <location>
        <begin position="176"/>
        <end position="196"/>
    </location>
</feature>
<feature type="transmembrane region" description="Helical" evidence="1">
    <location>
        <begin position="221"/>
        <end position="241"/>
    </location>
</feature>
<feature type="transmembrane region" description="Helical" evidence="1">
    <location>
        <begin position="245"/>
        <end position="265"/>
    </location>
</feature>
<feature type="transmembrane region" description="Helical" evidence="1">
    <location>
        <begin position="279"/>
        <end position="299"/>
    </location>
</feature>
<gene>
    <name evidence="1" type="primary">ubiA</name>
    <name type="ordered locus">XCV0405</name>
</gene>
<keyword id="KW-0997">Cell inner membrane</keyword>
<keyword id="KW-1003">Cell membrane</keyword>
<keyword id="KW-0460">Magnesium</keyword>
<keyword id="KW-0472">Membrane</keyword>
<keyword id="KW-0808">Transferase</keyword>
<keyword id="KW-0812">Transmembrane</keyword>
<keyword id="KW-1133">Transmembrane helix</keyword>
<keyword id="KW-0831">Ubiquinone biosynthesis</keyword>
<proteinExistence type="inferred from homology"/>